<dbReference type="EC" id="1.14.99.48" evidence="1"/>
<dbReference type="EMBL" id="BA000017">
    <property type="protein sequence ID" value="BAB57298.1"/>
    <property type="status" value="ALT_INIT"/>
    <property type="molecule type" value="Genomic_DNA"/>
</dbReference>
<dbReference type="RefSeq" id="WP_000670950.1">
    <property type="nucleotide sequence ID" value="NC_002758.2"/>
</dbReference>
<dbReference type="SMR" id="Q99UW8"/>
<dbReference type="KEGG" id="sav:SAV1136"/>
<dbReference type="HOGENOM" id="CLU_141544_2_1_9"/>
<dbReference type="PhylomeDB" id="Q99UW8"/>
<dbReference type="Proteomes" id="UP000002481">
    <property type="component" value="Chromosome"/>
</dbReference>
<dbReference type="GO" id="GO:0005737">
    <property type="term" value="C:cytoplasm"/>
    <property type="evidence" value="ECO:0007669"/>
    <property type="project" value="UniProtKB-SubCell"/>
</dbReference>
<dbReference type="GO" id="GO:0020037">
    <property type="term" value="F:heme binding"/>
    <property type="evidence" value="ECO:0007669"/>
    <property type="project" value="UniProtKB-UniRule"/>
</dbReference>
<dbReference type="GO" id="GO:0004392">
    <property type="term" value="F:heme oxygenase (decyclizing) activity"/>
    <property type="evidence" value="ECO:0007669"/>
    <property type="project" value="UniProtKB-UniRule"/>
</dbReference>
<dbReference type="GO" id="GO:0005506">
    <property type="term" value="F:iron ion binding"/>
    <property type="evidence" value="ECO:0007669"/>
    <property type="project" value="UniProtKB-UniRule"/>
</dbReference>
<dbReference type="GO" id="GO:0042167">
    <property type="term" value="P:heme catabolic process"/>
    <property type="evidence" value="ECO:0007669"/>
    <property type="project" value="UniProtKB-UniRule"/>
</dbReference>
<dbReference type="GO" id="GO:0033212">
    <property type="term" value="P:iron import into cell"/>
    <property type="evidence" value="ECO:0007669"/>
    <property type="project" value="InterPro"/>
</dbReference>
<dbReference type="Gene3D" id="3.30.70.100">
    <property type="match status" value="1"/>
</dbReference>
<dbReference type="HAMAP" id="MF_01272">
    <property type="entry name" value="Heme_degrading_monooxygenase"/>
    <property type="match status" value="1"/>
</dbReference>
<dbReference type="InterPro" id="IPR007138">
    <property type="entry name" value="ABM_dom"/>
</dbReference>
<dbReference type="InterPro" id="IPR011008">
    <property type="entry name" value="Dimeric_a/b-barrel"/>
</dbReference>
<dbReference type="InterPro" id="IPR050404">
    <property type="entry name" value="Heme-degrading_MO"/>
</dbReference>
<dbReference type="InterPro" id="IPR023953">
    <property type="entry name" value="IsdG"/>
</dbReference>
<dbReference type="NCBIfam" id="NF009837">
    <property type="entry name" value="PRK13312.1"/>
    <property type="match status" value="1"/>
</dbReference>
<dbReference type="PANTHER" id="PTHR34474:SF4">
    <property type="entry name" value="HEME OXYGENASE (STAPHYLOBILIN-PRODUCING) 1"/>
    <property type="match status" value="1"/>
</dbReference>
<dbReference type="PANTHER" id="PTHR34474">
    <property type="entry name" value="SIGNAL TRANSDUCTION PROTEIN TRAP"/>
    <property type="match status" value="1"/>
</dbReference>
<dbReference type="Pfam" id="PF03992">
    <property type="entry name" value="ABM"/>
    <property type="match status" value="1"/>
</dbReference>
<dbReference type="SUPFAM" id="SSF54909">
    <property type="entry name" value="Dimeric alpha+beta barrel"/>
    <property type="match status" value="1"/>
</dbReference>
<dbReference type="PROSITE" id="PS51725">
    <property type="entry name" value="ABM"/>
    <property type="match status" value="1"/>
</dbReference>
<protein>
    <recommendedName>
        <fullName evidence="1">Heme oxygenase (staphylobilin-producing) 1</fullName>
        <ecNumber evidence="1">1.14.99.48</ecNumber>
    </recommendedName>
    <alternativeName>
        <fullName evidence="1">Heme-degrading monooxygenase 1</fullName>
    </alternativeName>
    <alternativeName>
        <fullName evidence="1">Iron-regulated surface determinant 1</fullName>
    </alternativeName>
    <alternativeName>
        <fullName evidence="1">Iron-responsive surface determinant 1</fullName>
    </alternativeName>
</protein>
<organism>
    <name type="scientific">Staphylococcus aureus (strain Mu50 / ATCC 700699)</name>
    <dbReference type="NCBI Taxonomy" id="158878"/>
    <lineage>
        <taxon>Bacteria</taxon>
        <taxon>Bacillati</taxon>
        <taxon>Bacillota</taxon>
        <taxon>Bacilli</taxon>
        <taxon>Bacillales</taxon>
        <taxon>Staphylococcaceae</taxon>
        <taxon>Staphylococcus</taxon>
    </lineage>
</organism>
<evidence type="ECO:0000255" key="1">
    <source>
        <dbReference type="HAMAP-Rule" id="MF_01272"/>
    </source>
</evidence>
<evidence type="ECO:0000305" key="2"/>
<sequence>MKFMAENRLTLTKGTAKDIIERFYTRHGIETLEGFDGMFVTQTLEQEDFDEVKILTVWKSKQAFTDWLKSDVFKAAHKHVRSKNEDESSPIINNKVITYDIGYSYMK</sequence>
<name>HDOX1_STAAM</name>
<keyword id="KW-0963">Cytoplasm</keyword>
<keyword id="KW-0349">Heme</keyword>
<keyword id="KW-0408">Iron</keyword>
<keyword id="KW-0479">Metal-binding</keyword>
<keyword id="KW-0503">Monooxygenase</keyword>
<keyword id="KW-0560">Oxidoreductase</keyword>
<accession>Q99UW8</accession>
<feature type="chain" id="PRO_0000270087" description="Heme oxygenase (staphylobilin-producing) 1">
    <location>
        <begin position="1"/>
        <end position="107"/>
    </location>
</feature>
<feature type="domain" description="ABM" evidence="1">
    <location>
        <begin position="3"/>
        <end position="92"/>
    </location>
</feature>
<feature type="binding site" evidence="1">
    <location>
        <position position="7"/>
    </location>
    <ligand>
        <name>Fe cation</name>
        <dbReference type="ChEBI" id="CHEBI:24875"/>
    </ligand>
</feature>
<feature type="binding site" evidence="1">
    <location>
        <begin position="22"/>
        <end position="29"/>
    </location>
    <ligand>
        <name>heme</name>
        <dbReference type="ChEBI" id="CHEBI:30413"/>
    </ligand>
</feature>
<feature type="binding site" description="axial binding residue" evidence="1">
    <location>
        <position position="77"/>
    </location>
    <ligand>
        <name>heme</name>
        <dbReference type="ChEBI" id="CHEBI:30413"/>
    </ligand>
    <ligandPart>
        <name>Fe</name>
        <dbReference type="ChEBI" id="CHEBI:18248"/>
    </ligandPart>
</feature>
<feature type="site" description="Transition state stabilizer" evidence="1">
    <location>
        <position position="67"/>
    </location>
</feature>
<proteinExistence type="inferred from homology"/>
<comment type="function">
    <text evidence="1">Allows bacterial pathogens to use the host heme as an iron source. Catalyzes the oxidative degradation of the heme macrocyclic porphyrin ring to the oxo-bilirubin chromophore staphylobilin (a mixture of the linear tetrapyrroles 5-oxo-delta-bilirubin and 15-oxo-beta-bilirubin) in the presence of a suitable electron donor such as ascorbate or NADPH--cytochrome P450 reductase, with subsequent release of free iron.</text>
</comment>
<comment type="catalytic activity">
    <reaction evidence="1">
        <text>heme b + 5 AH2 + 4 O2 + 2 H(+) = delta-staphylobilin + Fe(2+) + formaldehyde + 5 A + 4 H2O</text>
        <dbReference type="Rhea" id="RHEA:37039"/>
        <dbReference type="ChEBI" id="CHEBI:13193"/>
        <dbReference type="ChEBI" id="CHEBI:15377"/>
        <dbReference type="ChEBI" id="CHEBI:15378"/>
        <dbReference type="ChEBI" id="CHEBI:15379"/>
        <dbReference type="ChEBI" id="CHEBI:16842"/>
        <dbReference type="ChEBI" id="CHEBI:17499"/>
        <dbReference type="ChEBI" id="CHEBI:29033"/>
        <dbReference type="ChEBI" id="CHEBI:60344"/>
        <dbReference type="ChEBI" id="CHEBI:74361"/>
        <dbReference type="EC" id="1.14.99.48"/>
    </reaction>
</comment>
<comment type="catalytic activity">
    <reaction evidence="1">
        <text>heme b + 5 AH2 + 4 O2 + 2 H(+) = beta-staphylobilin + Fe(2+) + formaldehyde + 5 A + 4 H2O</text>
        <dbReference type="Rhea" id="RHEA:37363"/>
        <dbReference type="ChEBI" id="CHEBI:13193"/>
        <dbReference type="ChEBI" id="CHEBI:15377"/>
        <dbReference type="ChEBI" id="CHEBI:15378"/>
        <dbReference type="ChEBI" id="CHEBI:15379"/>
        <dbReference type="ChEBI" id="CHEBI:16842"/>
        <dbReference type="ChEBI" id="CHEBI:17499"/>
        <dbReference type="ChEBI" id="CHEBI:29033"/>
        <dbReference type="ChEBI" id="CHEBI:60344"/>
        <dbReference type="ChEBI" id="CHEBI:74362"/>
        <dbReference type="EC" id="1.14.99.48"/>
    </reaction>
</comment>
<comment type="subunit">
    <text evidence="1">Homodimer.</text>
</comment>
<comment type="subcellular location">
    <subcellularLocation>
        <location evidence="1">Cytoplasm</location>
    </subcellularLocation>
</comment>
<comment type="similarity">
    <text evidence="1">Belongs to the antibiotic biosynthesis monooxygenase family. Heme-degrading monooxygenase IsdG subfamily.</text>
</comment>
<comment type="sequence caution" evidence="2">
    <conflict type="erroneous initiation">
        <sequence resource="EMBL-CDS" id="BAB57298"/>
    </conflict>
    <text>Truncated N-terminus.</text>
</comment>
<gene>
    <name type="primary">isdG</name>
    <name type="ordered locus">SAV1136</name>
</gene>
<reference key="1">
    <citation type="journal article" date="2001" name="Lancet">
        <title>Whole genome sequencing of meticillin-resistant Staphylococcus aureus.</title>
        <authorList>
            <person name="Kuroda M."/>
            <person name="Ohta T."/>
            <person name="Uchiyama I."/>
            <person name="Baba T."/>
            <person name="Yuzawa H."/>
            <person name="Kobayashi I."/>
            <person name="Cui L."/>
            <person name="Oguchi A."/>
            <person name="Aoki K."/>
            <person name="Nagai Y."/>
            <person name="Lian J.-Q."/>
            <person name="Ito T."/>
            <person name="Kanamori M."/>
            <person name="Matsumaru H."/>
            <person name="Maruyama A."/>
            <person name="Murakami H."/>
            <person name="Hosoyama A."/>
            <person name="Mizutani-Ui Y."/>
            <person name="Takahashi N.K."/>
            <person name="Sawano T."/>
            <person name="Inoue R."/>
            <person name="Kaito C."/>
            <person name="Sekimizu K."/>
            <person name="Hirakawa H."/>
            <person name="Kuhara S."/>
            <person name="Goto S."/>
            <person name="Yabuzaki J."/>
            <person name="Kanehisa M."/>
            <person name="Yamashita A."/>
            <person name="Oshima K."/>
            <person name="Furuya K."/>
            <person name="Yoshino C."/>
            <person name="Shiba T."/>
            <person name="Hattori M."/>
            <person name="Ogasawara N."/>
            <person name="Hayashi H."/>
            <person name="Hiramatsu K."/>
        </authorList>
    </citation>
    <scope>NUCLEOTIDE SEQUENCE [LARGE SCALE GENOMIC DNA]</scope>
    <source>
        <strain>Mu50 / ATCC 700699</strain>
    </source>
</reference>